<comment type="function">
    <text evidence="1">Bifunctional enzyme with both catalase and broad-spectrum peroxidase activity.</text>
</comment>
<comment type="catalytic activity">
    <reaction evidence="1">
        <text>H2O2 + AH2 = A + 2 H2O</text>
        <dbReference type="Rhea" id="RHEA:30275"/>
        <dbReference type="ChEBI" id="CHEBI:13193"/>
        <dbReference type="ChEBI" id="CHEBI:15377"/>
        <dbReference type="ChEBI" id="CHEBI:16240"/>
        <dbReference type="ChEBI" id="CHEBI:17499"/>
        <dbReference type="EC" id="1.11.1.21"/>
    </reaction>
</comment>
<comment type="catalytic activity">
    <reaction evidence="1">
        <text>2 H2O2 = O2 + 2 H2O</text>
        <dbReference type="Rhea" id="RHEA:20309"/>
        <dbReference type="ChEBI" id="CHEBI:15377"/>
        <dbReference type="ChEBI" id="CHEBI:15379"/>
        <dbReference type="ChEBI" id="CHEBI:16240"/>
        <dbReference type="EC" id="1.11.1.21"/>
    </reaction>
</comment>
<comment type="cofactor">
    <cofactor evidence="1">
        <name>heme b</name>
        <dbReference type="ChEBI" id="CHEBI:60344"/>
    </cofactor>
    <text evidence="1">Binds 1 heme b (iron(II)-protoporphyrin IX) group per dimer.</text>
</comment>
<comment type="subunit">
    <text evidence="1">Homodimer or homotetramer.</text>
</comment>
<comment type="PTM">
    <text evidence="1">Formation of the three residue Trp-Tyr-Met cross-link is important for the catalase, but not the peroxidase activity of the enzyme.</text>
</comment>
<comment type="similarity">
    <text evidence="1">Belongs to the peroxidase family. Peroxidase/catalase subfamily.</text>
</comment>
<comment type="sequence caution" evidence="2">
    <conflict type="erroneous initiation">
        <sequence resource="EMBL-CDS" id="AAM36172"/>
    </conflict>
</comment>
<feature type="chain" id="PRO_0000354954" description="Catalase-peroxidase">
    <location>
        <begin position="1"/>
        <end position="748"/>
    </location>
</feature>
<feature type="active site" description="Proton acceptor" evidence="1">
    <location>
        <position position="93"/>
    </location>
</feature>
<feature type="binding site" description="axial binding residue" evidence="1">
    <location>
        <position position="279"/>
    </location>
    <ligand>
        <name>heme b</name>
        <dbReference type="ChEBI" id="CHEBI:60344"/>
    </ligand>
    <ligandPart>
        <name>Fe</name>
        <dbReference type="ChEBI" id="CHEBI:18248"/>
    </ligandPart>
</feature>
<feature type="site" description="Transition state stabilizer" evidence="1">
    <location>
        <position position="89"/>
    </location>
</feature>
<feature type="cross-link" description="Tryptophyl-tyrosyl-methioninium (Trp-Tyr) (with M-264)" evidence="1">
    <location>
        <begin position="92"/>
        <end position="238"/>
    </location>
</feature>
<feature type="cross-link" description="Tryptophyl-tyrosyl-methioninium (Tyr-Met) (with W-92)" evidence="1">
    <location>
        <begin position="238"/>
        <end position="264"/>
    </location>
</feature>
<organism>
    <name type="scientific">Xanthomonas axonopodis pv. citri (strain 306)</name>
    <dbReference type="NCBI Taxonomy" id="190486"/>
    <lineage>
        <taxon>Bacteria</taxon>
        <taxon>Pseudomonadati</taxon>
        <taxon>Pseudomonadota</taxon>
        <taxon>Gammaproteobacteria</taxon>
        <taxon>Lysobacterales</taxon>
        <taxon>Lysobacteraceae</taxon>
        <taxon>Xanthomonas</taxon>
    </lineage>
</organism>
<gene>
    <name evidence="1" type="primary">katG</name>
    <name type="ordered locus">XAC1301</name>
</gene>
<reference key="1">
    <citation type="journal article" date="2002" name="Nature">
        <title>Comparison of the genomes of two Xanthomonas pathogens with differing host specificities.</title>
        <authorList>
            <person name="da Silva A.C.R."/>
            <person name="Ferro J.A."/>
            <person name="Reinach F.C."/>
            <person name="Farah C.S."/>
            <person name="Furlan L.R."/>
            <person name="Quaggio R.B."/>
            <person name="Monteiro-Vitorello C.B."/>
            <person name="Van Sluys M.A."/>
            <person name="Almeida N.F. Jr."/>
            <person name="Alves L.M.C."/>
            <person name="do Amaral A.M."/>
            <person name="Bertolini M.C."/>
            <person name="Camargo L.E.A."/>
            <person name="Camarotte G."/>
            <person name="Cannavan F."/>
            <person name="Cardozo J."/>
            <person name="Chambergo F."/>
            <person name="Ciapina L.P."/>
            <person name="Cicarelli R.M.B."/>
            <person name="Coutinho L.L."/>
            <person name="Cursino-Santos J.R."/>
            <person name="El-Dorry H."/>
            <person name="Faria J.B."/>
            <person name="Ferreira A.J.S."/>
            <person name="Ferreira R.C.C."/>
            <person name="Ferro M.I.T."/>
            <person name="Formighieri E.F."/>
            <person name="Franco M.C."/>
            <person name="Greggio C.C."/>
            <person name="Gruber A."/>
            <person name="Katsuyama A.M."/>
            <person name="Kishi L.T."/>
            <person name="Leite R.P."/>
            <person name="Lemos E.G.M."/>
            <person name="Lemos M.V.F."/>
            <person name="Locali E.C."/>
            <person name="Machado M.A."/>
            <person name="Madeira A.M.B.N."/>
            <person name="Martinez-Rossi N.M."/>
            <person name="Martins E.C."/>
            <person name="Meidanis J."/>
            <person name="Menck C.F.M."/>
            <person name="Miyaki C.Y."/>
            <person name="Moon D.H."/>
            <person name="Moreira L.M."/>
            <person name="Novo M.T.M."/>
            <person name="Okura V.K."/>
            <person name="Oliveira M.C."/>
            <person name="Oliveira V.R."/>
            <person name="Pereira H.A."/>
            <person name="Rossi A."/>
            <person name="Sena J.A.D."/>
            <person name="Silva C."/>
            <person name="de Souza R.F."/>
            <person name="Spinola L.A.F."/>
            <person name="Takita M.A."/>
            <person name="Tamura R.E."/>
            <person name="Teixeira E.C."/>
            <person name="Tezza R.I.D."/>
            <person name="Trindade dos Santos M."/>
            <person name="Truffi D."/>
            <person name="Tsai S.M."/>
            <person name="White F.F."/>
            <person name="Setubal J.C."/>
            <person name="Kitajima J.P."/>
        </authorList>
    </citation>
    <scope>NUCLEOTIDE SEQUENCE [LARGE SCALE GENOMIC DNA]</scope>
    <source>
        <strain>306</strain>
    </source>
</reference>
<protein>
    <recommendedName>
        <fullName evidence="1">Catalase-peroxidase</fullName>
        <shortName evidence="1">CP</shortName>
        <ecNumber evidence="1">1.11.1.21</ecNumber>
    </recommendedName>
    <alternativeName>
        <fullName evidence="1">Peroxidase/catalase</fullName>
    </alternativeName>
</protein>
<sequence length="748" mass="81991">MTTEAKCPFNHAVVGTGTTNRDWWPKQLRVDLLSQHSSKSNPLDPSFNYADAFKHLDLQALKQDLHALMTDSQDWWPADFGHYGPLFVRMAWHSAGTYRIGDGRGGGGRGQQRFAPLNSWPDNVSLDKARRLLWPIKQKYGQAISWADLMILTGNVALESMGLKTFGFAGGREDTWEPDQDLYWGRETKWLGGDERYSRGSPGVDEAHGVLVKDDDSQVPHTRDLENPLAAVQMGLIYVNPEGPDGNPDPIASARDIRDTFARMAMNDEETVALIAGGHTFGKTHGAGPADYVGAEPEAGELESQGFGWHNRYGSGKGADTITSGLEVTWTTTPAQWSNDYFDHLFGFEWELSKSPAGAHQWVAKNADAIIPDAHDASRKHRPTMLTTDLALRFDPAYEAISRRFQQHPEQFADAFARAWFKLTHRDMGPRARYLGADVPAEELVWQDPVPAVDHALVDAQDAAALKQTILASGLSVAHLVSTAWASASTFRGSDKRGGANGARIRLAPQKEWQANQPEQLAKVLATLERIQADFNAAQSGGKKISLADLVVLAGNAAVEHAAQAAGHQVTVPFAPGRTDASQEQTDVESFAVLEPVADGFRNFAKRRYAVPAEALLIDKAQLLTLTAPELTVLVGGLRVLGANVGDSKHGVFTSRPGVLSNDFFANLLDMRTEWKATSEAKEVFEGRDRSTGELRWTGTRVDLVFGSNSILRAVAEVYASADAQEKFVHDFVAAWTKVMQLDRFDLA</sequence>
<dbReference type="EC" id="1.11.1.21" evidence="1"/>
<dbReference type="EMBL" id="AE008923">
    <property type="protein sequence ID" value="AAM36172.1"/>
    <property type="status" value="ALT_INIT"/>
    <property type="molecule type" value="Genomic_DNA"/>
</dbReference>
<dbReference type="RefSeq" id="WP_011050828.1">
    <property type="nucleotide sequence ID" value="NC_003919.1"/>
</dbReference>
<dbReference type="SMR" id="Q8PMX4"/>
<dbReference type="PeroxiBase" id="2289">
    <property type="entry name" value="XacCP01"/>
</dbReference>
<dbReference type="GeneID" id="66910470"/>
<dbReference type="KEGG" id="xac:XAC1301"/>
<dbReference type="eggNOG" id="COG0376">
    <property type="taxonomic scope" value="Bacteria"/>
</dbReference>
<dbReference type="HOGENOM" id="CLU_025424_2_0_6"/>
<dbReference type="Proteomes" id="UP000000576">
    <property type="component" value="Chromosome"/>
</dbReference>
<dbReference type="GO" id="GO:0005829">
    <property type="term" value="C:cytosol"/>
    <property type="evidence" value="ECO:0007669"/>
    <property type="project" value="TreeGrafter"/>
</dbReference>
<dbReference type="GO" id="GO:0004096">
    <property type="term" value="F:catalase activity"/>
    <property type="evidence" value="ECO:0007669"/>
    <property type="project" value="UniProtKB-UniRule"/>
</dbReference>
<dbReference type="GO" id="GO:0020037">
    <property type="term" value="F:heme binding"/>
    <property type="evidence" value="ECO:0007669"/>
    <property type="project" value="InterPro"/>
</dbReference>
<dbReference type="GO" id="GO:0046872">
    <property type="term" value="F:metal ion binding"/>
    <property type="evidence" value="ECO:0007669"/>
    <property type="project" value="UniProtKB-KW"/>
</dbReference>
<dbReference type="GO" id="GO:0070301">
    <property type="term" value="P:cellular response to hydrogen peroxide"/>
    <property type="evidence" value="ECO:0007669"/>
    <property type="project" value="TreeGrafter"/>
</dbReference>
<dbReference type="GO" id="GO:0042744">
    <property type="term" value="P:hydrogen peroxide catabolic process"/>
    <property type="evidence" value="ECO:0007669"/>
    <property type="project" value="UniProtKB-KW"/>
</dbReference>
<dbReference type="CDD" id="cd00649">
    <property type="entry name" value="catalase_peroxidase_1"/>
    <property type="match status" value="1"/>
</dbReference>
<dbReference type="CDD" id="cd08200">
    <property type="entry name" value="catalase_peroxidase_2"/>
    <property type="match status" value="1"/>
</dbReference>
<dbReference type="FunFam" id="1.10.420.10:FF:000002">
    <property type="entry name" value="Catalase-peroxidase"/>
    <property type="match status" value="1"/>
</dbReference>
<dbReference type="FunFam" id="1.10.420.10:FF:000004">
    <property type="entry name" value="Catalase-peroxidase"/>
    <property type="match status" value="1"/>
</dbReference>
<dbReference type="FunFam" id="1.10.520.10:FF:000002">
    <property type="entry name" value="Catalase-peroxidase"/>
    <property type="match status" value="1"/>
</dbReference>
<dbReference type="FunFam" id="1.10.520.10:FF:000004">
    <property type="entry name" value="Catalase-peroxidase"/>
    <property type="match status" value="1"/>
</dbReference>
<dbReference type="Gene3D" id="1.10.520.10">
    <property type="match status" value="2"/>
</dbReference>
<dbReference type="Gene3D" id="1.10.420.10">
    <property type="entry name" value="Peroxidase, domain 2"/>
    <property type="match status" value="2"/>
</dbReference>
<dbReference type="HAMAP" id="MF_01961">
    <property type="entry name" value="Catal_peroxid"/>
    <property type="match status" value="1"/>
</dbReference>
<dbReference type="InterPro" id="IPR000763">
    <property type="entry name" value="Catalase_peroxidase"/>
</dbReference>
<dbReference type="InterPro" id="IPR002016">
    <property type="entry name" value="Haem_peroxidase"/>
</dbReference>
<dbReference type="InterPro" id="IPR010255">
    <property type="entry name" value="Haem_peroxidase_sf"/>
</dbReference>
<dbReference type="InterPro" id="IPR019794">
    <property type="entry name" value="Peroxidases_AS"/>
</dbReference>
<dbReference type="InterPro" id="IPR019793">
    <property type="entry name" value="Peroxidases_heam-ligand_BS"/>
</dbReference>
<dbReference type="NCBIfam" id="TIGR00198">
    <property type="entry name" value="cat_per_HPI"/>
    <property type="match status" value="1"/>
</dbReference>
<dbReference type="NCBIfam" id="NF011635">
    <property type="entry name" value="PRK15061.1"/>
    <property type="match status" value="1"/>
</dbReference>
<dbReference type="PANTHER" id="PTHR30555:SF0">
    <property type="entry name" value="CATALASE-PEROXIDASE"/>
    <property type="match status" value="1"/>
</dbReference>
<dbReference type="PANTHER" id="PTHR30555">
    <property type="entry name" value="HYDROPEROXIDASE I, BIFUNCTIONAL CATALASE-PEROXIDASE"/>
    <property type="match status" value="1"/>
</dbReference>
<dbReference type="Pfam" id="PF00141">
    <property type="entry name" value="peroxidase"/>
    <property type="match status" value="2"/>
</dbReference>
<dbReference type="PRINTS" id="PR00460">
    <property type="entry name" value="BPEROXIDASE"/>
</dbReference>
<dbReference type="PRINTS" id="PR00458">
    <property type="entry name" value="PEROXIDASE"/>
</dbReference>
<dbReference type="SUPFAM" id="SSF48113">
    <property type="entry name" value="Heme-dependent peroxidases"/>
    <property type="match status" value="2"/>
</dbReference>
<dbReference type="PROSITE" id="PS00435">
    <property type="entry name" value="PEROXIDASE_1"/>
    <property type="match status" value="1"/>
</dbReference>
<dbReference type="PROSITE" id="PS00436">
    <property type="entry name" value="PEROXIDASE_2"/>
    <property type="match status" value="1"/>
</dbReference>
<dbReference type="PROSITE" id="PS50873">
    <property type="entry name" value="PEROXIDASE_4"/>
    <property type="match status" value="1"/>
</dbReference>
<proteinExistence type="inferred from homology"/>
<evidence type="ECO:0000255" key="1">
    <source>
        <dbReference type="HAMAP-Rule" id="MF_01961"/>
    </source>
</evidence>
<evidence type="ECO:0000305" key="2"/>
<keyword id="KW-0349">Heme</keyword>
<keyword id="KW-0376">Hydrogen peroxide</keyword>
<keyword id="KW-0408">Iron</keyword>
<keyword id="KW-0479">Metal-binding</keyword>
<keyword id="KW-0560">Oxidoreductase</keyword>
<keyword id="KW-0575">Peroxidase</keyword>
<name>KATG_XANAC</name>
<accession>Q8PMX4</accession>